<sequence length="255" mass="28386">MAVISMKQLLEAGVHFGHQTRRWNPKMAKYIFTERNGIHVIDLQQTVKLADQAYEFVRDAAANDAVILFVGTKKQAAEAVADEATRAGQYFINHRWLGGTLTNWGTIQKRIARLKEIKRMEEEGTFDVLPKKEVALLNKQRARLEKFLGGIEDMPRIPDVMYVVDPHKEQIAVKEAKKLGIPVVAMVDTNADPDDIDIIIPANDDAIRAVKLITAKLADAIIEGRQGEDADVAFEADTQADSIEDIVEVVEGDNA</sequence>
<reference key="1">
    <citation type="journal article" date="2007" name="J. Bacteriol.">
        <title>Complete genome of acute rheumatic fever-associated serotype M5 Streptococcus pyogenes strain Manfredo.</title>
        <authorList>
            <person name="Holden M.T.G."/>
            <person name="Scott A."/>
            <person name="Cherevach I."/>
            <person name="Chillingworth T."/>
            <person name="Churcher C."/>
            <person name="Cronin A."/>
            <person name="Dowd L."/>
            <person name="Feltwell T."/>
            <person name="Hamlin N."/>
            <person name="Holroyd S."/>
            <person name="Jagels K."/>
            <person name="Moule S."/>
            <person name="Mungall K."/>
            <person name="Quail M.A."/>
            <person name="Price C."/>
            <person name="Rabbinowitsch E."/>
            <person name="Sharp S."/>
            <person name="Skelton J."/>
            <person name="Whitehead S."/>
            <person name="Barrell B.G."/>
            <person name="Kehoe M."/>
            <person name="Parkhill J."/>
        </authorList>
    </citation>
    <scope>NUCLEOTIDE SEQUENCE [LARGE SCALE GENOMIC DNA]</scope>
    <source>
        <strain>Manfredo</strain>
    </source>
</reference>
<protein>
    <recommendedName>
        <fullName evidence="1">Small ribosomal subunit protein uS2</fullName>
    </recommendedName>
    <alternativeName>
        <fullName evidence="2">30S ribosomal protein S2</fullName>
    </alternativeName>
</protein>
<keyword id="KW-0687">Ribonucleoprotein</keyword>
<keyword id="KW-0689">Ribosomal protein</keyword>
<organism>
    <name type="scientific">Streptococcus pyogenes serotype M5 (strain Manfredo)</name>
    <dbReference type="NCBI Taxonomy" id="160491"/>
    <lineage>
        <taxon>Bacteria</taxon>
        <taxon>Bacillati</taxon>
        <taxon>Bacillota</taxon>
        <taxon>Bacilli</taxon>
        <taxon>Lactobacillales</taxon>
        <taxon>Streptococcaceae</taxon>
        <taxon>Streptococcus</taxon>
    </lineage>
</organism>
<gene>
    <name evidence="1" type="primary">rpsB</name>
    <name type="ordered locus">SpyM51739</name>
</gene>
<evidence type="ECO:0000255" key="1">
    <source>
        <dbReference type="HAMAP-Rule" id="MF_00291"/>
    </source>
</evidence>
<evidence type="ECO:0000305" key="2"/>
<name>RS2_STRPG</name>
<accession>A2RGS9</accession>
<proteinExistence type="inferred from homology"/>
<comment type="similarity">
    <text evidence="1">Belongs to the universal ribosomal protein uS2 family.</text>
</comment>
<feature type="chain" id="PRO_1000004091" description="Small ribosomal subunit protein uS2">
    <location>
        <begin position="1"/>
        <end position="255"/>
    </location>
</feature>
<dbReference type="EMBL" id="AM295007">
    <property type="protein sequence ID" value="CAM31061.1"/>
    <property type="molecule type" value="Genomic_DNA"/>
</dbReference>
<dbReference type="RefSeq" id="WP_011055079.1">
    <property type="nucleotide sequence ID" value="NC_009332.1"/>
</dbReference>
<dbReference type="SMR" id="A2RGS9"/>
<dbReference type="KEGG" id="spf:SpyM51739"/>
<dbReference type="HOGENOM" id="CLU_040318_1_2_9"/>
<dbReference type="GO" id="GO:0022627">
    <property type="term" value="C:cytosolic small ribosomal subunit"/>
    <property type="evidence" value="ECO:0007669"/>
    <property type="project" value="TreeGrafter"/>
</dbReference>
<dbReference type="GO" id="GO:0003735">
    <property type="term" value="F:structural constituent of ribosome"/>
    <property type="evidence" value="ECO:0007669"/>
    <property type="project" value="InterPro"/>
</dbReference>
<dbReference type="GO" id="GO:0006412">
    <property type="term" value="P:translation"/>
    <property type="evidence" value="ECO:0007669"/>
    <property type="project" value="UniProtKB-UniRule"/>
</dbReference>
<dbReference type="CDD" id="cd01425">
    <property type="entry name" value="RPS2"/>
    <property type="match status" value="1"/>
</dbReference>
<dbReference type="FunFam" id="1.10.287.610:FF:000001">
    <property type="entry name" value="30S ribosomal protein S2"/>
    <property type="match status" value="1"/>
</dbReference>
<dbReference type="Gene3D" id="3.40.50.10490">
    <property type="entry name" value="Glucose-6-phosphate isomerase like protein, domain 1"/>
    <property type="match status" value="1"/>
</dbReference>
<dbReference type="Gene3D" id="1.10.287.610">
    <property type="entry name" value="Helix hairpin bin"/>
    <property type="match status" value="1"/>
</dbReference>
<dbReference type="HAMAP" id="MF_00291_B">
    <property type="entry name" value="Ribosomal_uS2_B"/>
    <property type="match status" value="1"/>
</dbReference>
<dbReference type="InterPro" id="IPR001865">
    <property type="entry name" value="Ribosomal_uS2"/>
</dbReference>
<dbReference type="InterPro" id="IPR005706">
    <property type="entry name" value="Ribosomal_uS2_bac/mit/plastid"/>
</dbReference>
<dbReference type="InterPro" id="IPR018130">
    <property type="entry name" value="Ribosomal_uS2_CS"/>
</dbReference>
<dbReference type="InterPro" id="IPR023591">
    <property type="entry name" value="Ribosomal_uS2_flav_dom_sf"/>
</dbReference>
<dbReference type="NCBIfam" id="TIGR01011">
    <property type="entry name" value="rpsB_bact"/>
    <property type="match status" value="1"/>
</dbReference>
<dbReference type="PANTHER" id="PTHR12534">
    <property type="entry name" value="30S RIBOSOMAL PROTEIN S2 PROKARYOTIC AND ORGANELLAR"/>
    <property type="match status" value="1"/>
</dbReference>
<dbReference type="PANTHER" id="PTHR12534:SF0">
    <property type="entry name" value="SMALL RIBOSOMAL SUBUNIT PROTEIN US2M"/>
    <property type="match status" value="1"/>
</dbReference>
<dbReference type="Pfam" id="PF00318">
    <property type="entry name" value="Ribosomal_S2"/>
    <property type="match status" value="1"/>
</dbReference>
<dbReference type="PRINTS" id="PR00395">
    <property type="entry name" value="RIBOSOMALS2"/>
</dbReference>
<dbReference type="SUPFAM" id="SSF52313">
    <property type="entry name" value="Ribosomal protein S2"/>
    <property type="match status" value="1"/>
</dbReference>
<dbReference type="PROSITE" id="PS00962">
    <property type="entry name" value="RIBOSOMAL_S2_1"/>
    <property type="match status" value="1"/>
</dbReference>